<sequence>MIIPALDLIDGTVVRLHQGDYARQRDYGNDPLPRLQDYAAQGAGVLHLVDLTGAKDPAKRQIPLIKTLVAGVNVPVQVGGGVRTEEDVAALLKAGVARVVIGSTAVKSPDVVKGWFERFGAQALVLALDVRIDEHGNKQVAVSGWQENSGVSLEQLVETYLPVGLKHVLCTDISRDGTLAGSNVSLYEEVCARYPQIAFQSSGGIGDIDDIAALRGTGVRGVIVGRALLEGKFTVKEAIQCWQNV</sequence>
<reference key="1">
    <citation type="journal article" date="2009" name="BMC Genomics">
        <title>Pseudogene accumulation in the evolutionary histories of Salmonella enterica serovars Paratyphi A and Typhi.</title>
        <authorList>
            <person name="Holt K.E."/>
            <person name="Thomson N.R."/>
            <person name="Wain J."/>
            <person name="Langridge G.C."/>
            <person name="Hasan R."/>
            <person name="Bhutta Z.A."/>
            <person name="Quail M.A."/>
            <person name="Norbertczak H."/>
            <person name="Walker D."/>
            <person name="Simmonds M."/>
            <person name="White B."/>
            <person name="Bason N."/>
            <person name="Mungall K."/>
            <person name="Dougan G."/>
            <person name="Parkhill J."/>
        </authorList>
    </citation>
    <scope>NUCLEOTIDE SEQUENCE [LARGE SCALE GENOMIC DNA]</scope>
    <source>
        <strain>AKU_12601</strain>
    </source>
</reference>
<name>HIS4_SALPK</name>
<feature type="chain" id="PRO_1000190555" description="1-(5-phosphoribosyl)-5-[(5-phosphoribosylamino)methylideneamino] imidazole-4-carboxamide isomerase">
    <location>
        <begin position="1"/>
        <end position="245"/>
    </location>
</feature>
<feature type="active site" description="Proton acceptor" evidence="1">
    <location>
        <position position="7"/>
    </location>
</feature>
<feature type="active site" description="Proton donor" evidence="1">
    <location>
        <position position="129"/>
    </location>
</feature>
<comment type="catalytic activity">
    <reaction evidence="1">
        <text>1-(5-phospho-beta-D-ribosyl)-5-[(5-phospho-beta-D-ribosylamino)methylideneamino]imidazole-4-carboxamide = 5-[(5-phospho-1-deoxy-D-ribulos-1-ylimino)methylamino]-1-(5-phospho-beta-D-ribosyl)imidazole-4-carboxamide</text>
        <dbReference type="Rhea" id="RHEA:15469"/>
        <dbReference type="ChEBI" id="CHEBI:58435"/>
        <dbReference type="ChEBI" id="CHEBI:58525"/>
        <dbReference type="EC" id="5.3.1.16"/>
    </reaction>
</comment>
<comment type="pathway">
    <text evidence="1">Amino-acid biosynthesis; L-histidine biosynthesis; L-histidine from 5-phospho-alpha-D-ribose 1-diphosphate: step 4/9.</text>
</comment>
<comment type="subcellular location">
    <subcellularLocation>
        <location evidence="1">Cytoplasm</location>
    </subcellularLocation>
</comment>
<comment type="similarity">
    <text evidence="1">Belongs to the HisA/HisF family.</text>
</comment>
<dbReference type="EC" id="5.3.1.16" evidence="1"/>
<dbReference type="EMBL" id="FM200053">
    <property type="protein sequence ID" value="CAR58881.1"/>
    <property type="molecule type" value="Genomic_DNA"/>
</dbReference>
<dbReference type="RefSeq" id="WP_000586406.1">
    <property type="nucleotide sequence ID" value="NC_011147.1"/>
</dbReference>
<dbReference type="SMR" id="B5BFB6"/>
<dbReference type="KEGG" id="sek:SSPA0745"/>
<dbReference type="HOGENOM" id="CLU_048577_1_2_6"/>
<dbReference type="UniPathway" id="UPA00031">
    <property type="reaction ID" value="UER00009"/>
</dbReference>
<dbReference type="Proteomes" id="UP000001869">
    <property type="component" value="Chromosome"/>
</dbReference>
<dbReference type="GO" id="GO:0005737">
    <property type="term" value="C:cytoplasm"/>
    <property type="evidence" value="ECO:0007669"/>
    <property type="project" value="UniProtKB-SubCell"/>
</dbReference>
<dbReference type="GO" id="GO:0003949">
    <property type="term" value="F:1-(5-phosphoribosyl)-5-[(5-phosphoribosylamino)methylideneamino]imidazole-4-carboxamide isomerase activity"/>
    <property type="evidence" value="ECO:0007669"/>
    <property type="project" value="UniProtKB-UniRule"/>
</dbReference>
<dbReference type="GO" id="GO:0000105">
    <property type="term" value="P:L-histidine biosynthetic process"/>
    <property type="evidence" value="ECO:0007669"/>
    <property type="project" value="UniProtKB-UniRule"/>
</dbReference>
<dbReference type="GO" id="GO:0000162">
    <property type="term" value="P:L-tryptophan biosynthetic process"/>
    <property type="evidence" value="ECO:0007669"/>
    <property type="project" value="TreeGrafter"/>
</dbReference>
<dbReference type="CDD" id="cd04732">
    <property type="entry name" value="HisA"/>
    <property type="match status" value="1"/>
</dbReference>
<dbReference type="FunFam" id="3.20.20.70:FF:000009">
    <property type="entry name" value="1-(5-phosphoribosyl)-5-[(5-phosphoribosylamino)methylideneamino] imidazole-4-carboxamide isomerase"/>
    <property type="match status" value="1"/>
</dbReference>
<dbReference type="Gene3D" id="3.20.20.70">
    <property type="entry name" value="Aldolase class I"/>
    <property type="match status" value="1"/>
</dbReference>
<dbReference type="HAMAP" id="MF_01014">
    <property type="entry name" value="HisA"/>
    <property type="match status" value="1"/>
</dbReference>
<dbReference type="InterPro" id="IPR013785">
    <property type="entry name" value="Aldolase_TIM"/>
</dbReference>
<dbReference type="InterPro" id="IPR006062">
    <property type="entry name" value="His_biosynth"/>
</dbReference>
<dbReference type="InterPro" id="IPR006063">
    <property type="entry name" value="HisA_bact_arch"/>
</dbReference>
<dbReference type="InterPro" id="IPR044524">
    <property type="entry name" value="Isoase_HisA-like"/>
</dbReference>
<dbReference type="InterPro" id="IPR023016">
    <property type="entry name" value="Isoase_HisA-like_bact"/>
</dbReference>
<dbReference type="InterPro" id="IPR011060">
    <property type="entry name" value="RibuloseP-bd_barrel"/>
</dbReference>
<dbReference type="NCBIfam" id="TIGR00007">
    <property type="entry name" value="1-(5-phosphoribosyl)-5-[(5-phosphoribosylamino)methylideneamino]imidazole-4-carboxamide isomerase"/>
    <property type="match status" value="1"/>
</dbReference>
<dbReference type="PANTHER" id="PTHR43090">
    <property type="entry name" value="1-(5-PHOSPHORIBOSYL)-5-[(5-PHOSPHORIBOSYLAMINO)METHYLIDENEAMINO] IMIDAZOLE-4-CARBOXAMIDE ISOMERASE"/>
    <property type="match status" value="1"/>
</dbReference>
<dbReference type="PANTHER" id="PTHR43090:SF2">
    <property type="entry name" value="1-(5-PHOSPHORIBOSYL)-5-[(5-PHOSPHORIBOSYLAMINO)METHYLIDENEAMINO] IMIDAZOLE-4-CARBOXAMIDE ISOMERASE"/>
    <property type="match status" value="1"/>
</dbReference>
<dbReference type="Pfam" id="PF00977">
    <property type="entry name" value="His_biosynth"/>
    <property type="match status" value="1"/>
</dbReference>
<dbReference type="SUPFAM" id="SSF51366">
    <property type="entry name" value="Ribulose-phoshate binding barrel"/>
    <property type="match status" value="1"/>
</dbReference>
<proteinExistence type="inferred from homology"/>
<keyword id="KW-0028">Amino-acid biosynthesis</keyword>
<keyword id="KW-0963">Cytoplasm</keyword>
<keyword id="KW-0368">Histidine biosynthesis</keyword>
<keyword id="KW-0413">Isomerase</keyword>
<organism>
    <name type="scientific">Salmonella paratyphi A (strain AKU_12601)</name>
    <dbReference type="NCBI Taxonomy" id="554290"/>
    <lineage>
        <taxon>Bacteria</taxon>
        <taxon>Pseudomonadati</taxon>
        <taxon>Pseudomonadota</taxon>
        <taxon>Gammaproteobacteria</taxon>
        <taxon>Enterobacterales</taxon>
        <taxon>Enterobacteriaceae</taxon>
        <taxon>Salmonella</taxon>
    </lineage>
</organism>
<accession>B5BFB6</accession>
<gene>
    <name evidence="1" type="primary">hisA</name>
    <name type="ordered locus">SSPA0745</name>
</gene>
<evidence type="ECO:0000255" key="1">
    <source>
        <dbReference type="HAMAP-Rule" id="MF_01014"/>
    </source>
</evidence>
<protein>
    <recommendedName>
        <fullName evidence="1">1-(5-phosphoribosyl)-5-[(5-phosphoribosylamino)methylideneamino] imidazole-4-carboxamide isomerase</fullName>
        <ecNumber evidence="1">5.3.1.16</ecNumber>
    </recommendedName>
    <alternativeName>
        <fullName evidence="1">Phosphoribosylformimino-5-aminoimidazole carboxamide ribotide isomerase</fullName>
    </alternativeName>
</protein>